<comment type="function">
    <text evidence="1">Tetrapolymerization of the monopyrrole PBG into the hydroxymethylbilane pre-uroporphyrinogen in several discrete steps.</text>
</comment>
<comment type="catalytic activity">
    <reaction evidence="1">
        <text>4 porphobilinogen + H2O = hydroxymethylbilane + 4 NH4(+)</text>
        <dbReference type="Rhea" id="RHEA:13185"/>
        <dbReference type="ChEBI" id="CHEBI:15377"/>
        <dbReference type="ChEBI" id="CHEBI:28938"/>
        <dbReference type="ChEBI" id="CHEBI:57845"/>
        <dbReference type="ChEBI" id="CHEBI:58126"/>
        <dbReference type="EC" id="2.5.1.61"/>
    </reaction>
</comment>
<comment type="cofactor">
    <cofactor evidence="1">
        <name>dipyrromethane</name>
        <dbReference type="ChEBI" id="CHEBI:60342"/>
    </cofactor>
    <text evidence="1">Binds 1 dipyrromethane group covalently.</text>
</comment>
<comment type="pathway">
    <text evidence="1">Porphyrin-containing compound metabolism; protoporphyrin-IX biosynthesis; coproporphyrinogen-III from 5-aminolevulinate: step 2/4.</text>
</comment>
<comment type="subunit">
    <text evidence="1">Monomer.</text>
</comment>
<comment type="miscellaneous">
    <text evidence="1">The porphobilinogen subunits are added to the dipyrromethane group.</text>
</comment>
<comment type="similarity">
    <text evidence="1">Belongs to the HMBS family.</text>
</comment>
<accession>B7JQ57</accession>
<sequence>MRKIIVGSRKSKLALTQTNWFIDQLKALGLPYEFEVKEIVTKGDVILDVTLSKVGGKGLFVKEIEHALLTKEIDMAVHSMKDMPAVLPEGLMIGCTPKRVDPRDAFISKSGASFKELAEGAILGTSSLRRSAQLLAARPDLQVKWIRGNIDTRLRKLKEEDYDAIILATAGLQRMGWDNEVITEHLDETLCVPAVGQGALAIECREDDKDLLQLLAHINDAVTEKTVAAERVFLHKLEGGCQVPIAGYATITENDAIELTALVGSMDGSVLLKETVVGTDPEKVGLEAADRLIKQGAKELILAANKGQQ</sequence>
<protein>
    <recommendedName>
        <fullName evidence="1">Porphobilinogen deaminase</fullName>
        <shortName evidence="1">PBG</shortName>
        <ecNumber evidence="1">2.5.1.61</ecNumber>
    </recommendedName>
    <alternativeName>
        <fullName evidence="1">Hydroxymethylbilane synthase</fullName>
        <shortName evidence="1">HMBS</shortName>
    </alternativeName>
    <alternativeName>
        <fullName evidence="1">Pre-uroporphyrinogen synthase</fullName>
    </alternativeName>
</protein>
<dbReference type="EC" id="2.5.1.61" evidence="1"/>
<dbReference type="EMBL" id="CP001283">
    <property type="protein sequence ID" value="ACK90159.1"/>
    <property type="molecule type" value="Genomic_DNA"/>
</dbReference>
<dbReference type="RefSeq" id="WP_001226418.1">
    <property type="nucleotide sequence ID" value="NC_011773.1"/>
</dbReference>
<dbReference type="SMR" id="B7JQ57"/>
<dbReference type="KEGG" id="bcu:BCAH820_4551"/>
<dbReference type="HOGENOM" id="CLU_019704_0_2_9"/>
<dbReference type="UniPathway" id="UPA00251">
    <property type="reaction ID" value="UER00319"/>
</dbReference>
<dbReference type="Proteomes" id="UP000001363">
    <property type="component" value="Chromosome"/>
</dbReference>
<dbReference type="GO" id="GO:0005737">
    <property type="term" value="C:cytoplasm"/>
    <property type="evidence" value="ECO:0007669"/>
    <property type="project" value="TreeGrafter"/>
</dbReference>
<dbReference type="GO" id="GO:0004418">
    <property type="term" value="F:hydroxymethylbilane synthase activity"/>
    <property type="evidence" value="ECO:0007669"/>
    <property type="project" value="UniProtKB-UniRule"/>
</dbReference>
<dbReference type="GO" id="GO:0006782">
    <property type="term" value="P:protoporphyrinogen IX biosynthetic process"/>
    <property type="evidence" value="ECO:0007669"/>
    <property type="project" value="UniProtKB-UniRule"/>
</dbReference>
<dbReference type="CDD" id="cd13646">
    <property type="entry name" value="PBP2_EcHMBS_like"/>
    <property type="match status" value="1"/>
</dbReference>
<dbReference type="FunFam" id="3.30.160.40:FF:000001">
    <property type="entry name" value="Porphobilinogen deaminase"/>
    <property type="match status" value="1"/>
</dbReference>
<dbReference type="FunFam" id="3.40.190.10:FF:000004">
    <property type="entry name" value="Porphobilinogen deaminase"/>
    <property type="match status" value="1"/>
</dbReference>
<dbReference type="FunFam" id="3.40.190.10:FF:000005">
    <property type="entry name" value="Porphobilinogen deaminase"/>
    <property type="match status" value="1"/>
</dbReference>
<dbReference type="Gene3D" id="3.40.190.10">
    <property type="entry name" value="Periplasmic binding protein-like II"/>
    <property type="match status" value="2"/>
</dbReference>
<dbReference type="Gene3D" id="3.30.160.40">
    <property type="entry name" value="Porphobilinogen deaminase, C-terminal domain"/>
    <property type="match status" value="1"/>
</dbReference>
<dbReference type="HAMAP" id="MF_00260">
    <property type="entry name" value="Porphobil_deam"/>
    <property type="match status" value="1"/>
</dbReference>
<dbReference type="InterPro" id="IPR000860">
    <property type="entry name" value="HemC"/>
</dbReference>
<dbReference type="InterPro" id="IPR022419">
    <property type="entry name" value="Porphobilin_deaminase_cofac_BS"/>
</dbReference>
<dbReference type="InterPro" id="IPR022417">
    <property type="entry name" value="Porphobilin_deaminase_N"/>
</dbReference>
<dbReference type="InterPro" id="IPR022418">
    <property type="entry name" value="Porphobilinogen_deaminase_C"/>
</dbReference>
<dbReference type="InterPro" id="IPR036803">
    <property type="entry name" value="Porphobilinogen_deaminase_C_sf"/>
</dbReference>
<dbReference type="NCBIfam" id="TIGR00212">
    <property type="entry name" value="hemC"/>
    <property type="match status" value="1"/>
</dbReference>
<dbReference type="PANTHER" id="PTHR11557">
    <property type="entry name" value="PORPHOBILINOGEN DEAMINASE"/>
    <property type="match status" value="1"/>
</dbReference>
<dbReference type="PANTHER" id="PTHR11557:SF0">
    <property type="entry name" value="PORPHOBILINOGEN DEAMINASE"/>
    <property type="match status" value="1"/>
</dbReference>
<dbReference type="Pfam" id="PF01379">
    <property type="entry name" value="Porphobil_deam"/>
    <property type="match status" value="1"/>
</dbReference>
<dbReference type="Pfam" id="PF03900">
    <property type="entry name" value="Porphobil_deamC"/>
    <property type="match status" value="1"/>
</dbReference>
<dbReference type="PIRSF" id="PIRSF001438">
    <property type="entry name" value="4pyrrol_synth_OHMeBilane_synth"/>
    <property type="match status" value="1"/>
</dbReference>
<dbReference type="PRINTS" id="PR00151">
    <property type="entry name" value="PORPHBDMNASE"/>
</dbReference>
<dbReference type="SUPFAM" id="SSF53850">
    <property type="entry name" value="Periplasmic binding protein-like II"/>
    <property type="match status" value="1"/>
</dbReference>
<dbReference type="SUPFAM" id="SSF54782">
    <property type="entry name" value="Porphobilinogen deaminase (hydroxymethylbilane synthase), C-terminal domain"/>
    <property type="match status" value="1"/>
</dbReference>
<dbReference type="PROSITE" id="PS00533">
    <property type="entry name" value="PORPHOBILINOGEN_DEAM"/>
    <property type="match status" value="1"/>
</dbReference>
<keyword id="KW-0627">Porphyrin biosynthesis</keyword>
<keyword id="KW-0808">Transferase</keyword>
<gene>
    <name evidence="1" type="primary">hemC</name>
    <name type="ordered locus">BCAH820_4551</name>
</gene>
<reference key="1">
    <citation type="submission" date="2008-10" db="EMBL/GenBank/DDBJ databases">
        <title>Genome sequence of Bacillus cereus AH820.</title>
        <authorList>
            <person name="Dodson R.J."/>
            <person name="Durkin A.S."/>
            <person name="Rosovitz M.J."/>
            <person name="Rasko D.A."/>
            <person name="Hoffmaster A."/>
            <person name="Ravel J."/>
            <person name="Sutton G."/>
        </authorList>
    </citation>
    <scope>NUCLEOTIDE SEQUENCE [LARGE SCALE GENOMIC DNA]</scope>
    <source>
        <strain>AH820</strain>
    </source>
</reference>
<organism>
    <name type="scientific">Bacillus cereus (strain AH820)</name>
    <dbReference type="NCBI Taxonomy" id="405535"/>
    <lineage>
        <taxon>Bacteria</taxon>
        <taxon>Bacillati</taxon>
        <taxon>Bacillota</taxon>
        <taxon>Bacilli</taxon>
        <taxon>Bacillales</taxon>
        <taxon>Bacillaceae</taxon>
        <taxon>Bacillus</taxon>
        <taxon>Bacillus cereus group</taxon>
    </lineage>
</organism>
<feature type="chain" id="PRO_1000119207" description="Porphobilinogen deaminase">
    <location>
        <begin position="1"/>
        <end position="309"/>
    </location>
</feature>
<feature type="modified residue" description="S-(dipyrrolylmethanemethyl)cysteine" evidence="1">
    <location>
        <position position="241"/>
    </location>
</feature>
<name>HEM3_BACC0</name>
<proteinExistence type="inferred from homology"/>
<evidence type="ECO:0000255" key="1">
    <source>
        <dbReference type="HAMAP-Rule" id="MF_00260"/>
    </source>
</evidence>